<sequence length="172" mass="19018">MELDLTSIAPELQEELNRNVMFTTLETVKGWVRSNSLWPLTFGLACCAIEMMGTGGARYDLDRFGVIFRASPRQSDVMIVAGTVTKKMAPLLRRLYDQMPEPKWVIAMGSCATAGGPYVRSYSVVKGVDQIVPVDVYIPGCPPNPAALIYGINKLQEKIRYEAKTGKQVTNL</sequence>
<protein>
    <recommendedName>
        <fullName evidence="1">NADH-quinone oxidoreductase subunit B</fullName>
        <ecNumber evidence="1">7.1.1.-</ecNumber>
    </recommendedName>
    <alternativeName>
        <fullName evidence="1">NADH dehydrogenase I subunit B</fullName>
    </alternativeName>
    <alternativeName>
        <fullName evidence="1">NDH-1 subunit B</fullName>
    </alternativeName>
</protein>
<evidence type="ECO:0000255" key="1">
    <source>
        <dbReference type="HAMAP-Rule" id="MF_01356"/>
    </source>
</evidence>
<reference key="1">
    <citation type="submission" date="2005-03" db="EMBL/GenBank/DDBJ databases">
        <title>Brevibacillus brevis strain 47, complete genome.</title>
        <authorList>
            <person name="Hosoyama A."/>
            <person name="Yamada R."/>
            <person name="Hongo Y."/>
            <person name="Terui Y."/>
            <person name="Ankai A."/>
            <person name="Masuyama W."/>
            <person name="Sekiguchi M."/>
            <person name="Takeda T."/>
            <person name="Asano K."/>
            <person name="Ohji S."/>
            <person name="Ichikawa N."/>
            <person name="Narita S."/>
            <person name="Aoki N."/>
            <person name="Miura H."/>
            <person name="Matsushita S."/>
            <person name="Sekigawa T."/>
            <person name="Yamagata H."/>
            <person name="Yoshikawa H."/>
            <person name="Udaka S."/>
            <person name="Tanikawa S."/>
            <person name="Fujita N."/>
        </authorList>
    </citation>
    <scope>NUCLEOTIDE SEQUENCE [LARGE SCALE GENOMIC DNA]</scope>
    <source>
        <strain>47 / JCM 6285 / NBRC 100599</strain>
    </source>
</reference>
<organism>
    <name type="scientific">Brevibacillus brevis (strain 47 / JCM 6285 / NBRC 100599)</name>
    <dbReference type="NCBI Taxonomy" id="358681"/>
    <lineage>
        <taxon>Bacteria</taxon>
        <taxon>Bacillati</taxon>
        <taxon>Bacillota</taxon>
        <taxon>Bacilli</taxon>
        <taxon>Bacillales</taxon>
        <taxon>Paenibacillaceae</taxon>
        <taxon>Brevibacillus</taxon>
    </lineage>
</organism>
<dbReference type="EC" id="7.1.1.-" evidence="1"/>
<dbReference type="EMBL" id="AP008955">
    <property type="protein sequence ID" value="BAH46421.1"/>
    <property type="molecule type" value="Genomic_DNA"/>
</dbReference>
<dbReference type="RefSeq" id="WP_007725455.1">
    <property type="nucleotide sequence ID" value="NC_012491.1"/>
</dbReference>
<dbReference type="SMR" id="C0Z772"/>
<dbReference type="STRING" id="358681.BBR47_54440"/>
<dbReference type="KEGG" id="bbe:BBR47_54440"/>
<dbReference type="eggNOG" id="COG0377">
    <property type="taxonomic scope" value="Bacteria"/>
</dbReference>
<dbReference type="HOGENOM" id="CLU_055737_7_3_9"/>
<dbReference type="Proteomes" id="UP000001877">
    <property type="component" value="Chromosome"/>
</dbReference>
<dbReference type="GO" id="GO:0005886">
    <property type="term" value="C:plasma membrane"/>
    <property type="evidence" value="ECO:0007669"/>
    <property type="project" value="UniProtKB-SubCell"/>
</dbReference>
<dbReference type="GO" id="GO:0045271">
    <property type="term" value="C:respiratory chain complex I"/>
    <property type="evidence" value="ECO:0007669"/>
    <property type="project" value="TreeGrafter"/>
</dbReference>
<dbReference type="GO" id="GO:0051539">
    <property type="term" value="F:4 iron, 4 sulfur cluster binding"/>
    <property type="evidence" value="ECO:0007669"/>
    <property type="project" value="UniProtKB-KW"/>
</dbReference>
<dbReference type="GO" id="GO:0005506">
    <property type="term" value="F:iron ion binding"/>
    <property type="evidence" value="ECO:0007669"/>
    <property type="project" value="UniProtKB-UniRule"/>
</dbReference>
<dbReference type="GO" id="GO:0008137">
    <property type="term" value="F:NADH dehydrogenase (ubiquinone) activity"/>
    <property type="evidence" value="ECO:0007669"/>
    <property type="project" value="InterPro"/>
</dbReference>
<dbReference type="GO" id="GO:0050136">
    <property type="term" value="F:NADH:ubiquinone reductase (non-electrogenic) activity"/>
    <property type="evidence" value="ECO:0007669"/>
    <property type="project" value="UniProtKB-UniRule"/>
</dbReference>
<dbReference type="GO" id="GO:0048038">
    <property type="term" value="F:quinone binding"/>
    <property type="evidence" value="ECO:0007669"/>
    <property type="project" value="UniProtKB-KW"/>
</dbReference>
<dbReference type="GO" id="GO:0009060">
    <property type="term" value="P:aerobic respiration"/>
    <property type="evidence" value="ECO:0007669"/>
    <property type="project" value="TreeGrafter"/>
</dbReference>
<dbReference type="GO" id="GO:0015990">
    <property type="term" value="P:electron transport coupled proton transport"/>
    <property type="evidence" value="ECO:0007669"/>
    <property type="project" value="TreeGrafter"/>
</dbReference>
<dbReference type="FunFam" id="3.40.50.12280:FF:000002">
    <property type="entry name" value="NADH-quinone oxidoreductase subunit B"/>
    <property type="match status" value="1"/>
</dbReference>
<dbReference type="Gene3D" id="3.40.50.12280">
    <property type="match status" value="1"/>
</dbReference>
<dbReference type="HAMAP" id="MF_01356">
    <property type="entry name" value="NDH1_NuoB"/>
    <property type="match status" value="1"/>
</dbReference>
<dbReference type="InterPro" id="IPR006137">
    <property type="entry name" value="NADH_UbQ_OxRdtase-like_20kDa"/>
</dbReference>
<dbReference type="InterPro" id="IPR006138">
    <property type="entry name" value="NADH_UQ_OxRdtase_20Kd_su"/>
</dbReference>
<dbReference type="NCBIfam" id="TIGR01957">
    <property type="entry name" value="nuoB_fam"/>
    <property type="match status" value="1"/>
</dbReference>
<dbReference type="NCBIfam" id="NF005012">
    <property type="entry name" value="PRK06411.1"/>
    <property type="match status" value="1"/>
</dbReference>
<dbReference type="PANTHER" id="PTHR11995">
    <property type="entry name" value="NADH DEHYDROGENASE"/>
    <property type="match status" value="1"/>
</dbReference>
<dbReference type="PANTHER" id="PTHR11995:SF14">
    <property type="entry name" value="NADH DEHYDROGENASE [UBIQUINONE] IRON-SULFUR PROTEIN 7, MITOCHONDRIAL"/>
    <property type="match status" value="1"/>
</dbReference>
<dbReference type="Pfam" id="PF01058">
    <property type="entry name" value="Oxidored_q6"/>
    <property type="match status" value="1"/>
</dbReference>
<dbReference type="SUPFAM" id="SSF56770">
    <property type="entry name" value="HydA/Nqo6-like"/>
    <property type="match status" value="1"/>
</dbReference>
<comment type="function">
    <text evidence="1">NDH-1 shuttles electrons from NADH, via FMN and iron-sulfur (Fe-S) centers, to quinones in the respiratory chain. The immediate electron acceptor for the enzyme in this species is believed to be a menaquinone. Couples the redox reaction to proton translocation (for every two electrons transferred, four hydrogen ions are translocated across the cytoplasmic membrane), and thus conserves the redox energy in a proton gradient.</text>
</comment>
<comment type="catalytic activity">
    <reaction evidence="1">
        <text>a quinone + NADH + 5 H(+)(in) = a quinol + NAD(+) + 4 H(+)(out)</text>
        <dbReference type="Rhea" id="RHEA:57888"/>
        <dbReference type="ChEBI" id="CHEBI:15378"/>
        <dbReference type="ChEBI" id="CHEBI:24646"/>
        <dbReference type="ChEBI" id="CHEBI:57540"/>
        <dbReference type="ChEBI" id="CHEBI:57945"/>
        <dbReference type="ChEBI" id="CHEBI:132124"/>
    </reaction>
</comment>
<comment type="cofactor">
    <cofactor evidence="1">
        <name>[4Fe-4S] cluster</name>
        <dbReference type="ChEBI" id="CHEBI:49883"/>
    </cofactor>
    <text evidence="1">Binds 1 [4Fe-4S] cluster.</text>
</comment>
<comment type="subunit">
    <text evidence="1">NDH-1 is composed of 14 different subunits. Subunits NuoB, C, D, E, F, and G constitute the peripheral sector of the complex.</text>
</comment>
<comment type="subcellular location">
    <subcellularLocation>
        <location evidence="1">Cell membrane</location>
        <topology evidence="1">Peripheral membrane protein</topology>
        <orientation evidence="1">Cytoplasmic side</orientation>
    </subcellularLocation>
</comment>
<comment type="similarity">
    <text evidence="1">Belongs to the complex I 20 kDa subunit family.</text>
</comment>
<feature type="chain" id="PRO_1000214856" description="NADH-quinone oxidoreductase subunit B">
    <location>
        <begin position="1"/>
        <end position="172"/>
    </location>
</feature>
<feature type="binding site" evidence="1">
    <location>
        <position position="46"/>
    </location>
    <ligand>
        <name>[4Fe-4S] cluster</name>
        <dbReference type="ChEBI" id="CHEBI:49883"/>
    </ligand>
</feature>
<feature type="binding site" evidence="1">
    <location>
        <position position="47"/>
    </location>
    <ligand>
        <name>[4Fe-4S] cluster</name>
        <dbReference type="ChEBI" id="CHEBI:49883"/>
    </ligand>
</feature>
<feature type="binding site" evidence="1">
    <location>
        <position position="111"/>
    </location>
    <ligand>
        <name>[4Fe-4S] cluster</name>
        <dbReference type="ChEBI" id="CHEBI:49883"/>
    </ligand>
</feature>
<feature type="binding site" evidence="1">
    <location>
        <position position="141"/>
    </location>
    <ligand>
        <name>[4Fe-4S] cluster</name>
        <dbReference type="ChEBI" id="CHEBI:49883"/>
    </ligand>
</feature>
<proteinExistence type="inferred from homology"/>
<gene>
    <name evidence="1" type="primary">nuoB</name>
    <name type="ordered locus">BBR47_54440</name>
</gene>
<accession>C0Z772</accession>
<keyword id="KW-0004">4Fe-4S</keyword>
<keyword id="KW-1003">Cell membrane</keyword>
<keyword id="KW-0408">Iron</keyword>
<keyword id="KW-0411">Iron-sulfur</keyword>
<keyword id="KW-0472">Membrane</keyword>
<keyword id="KW-0479">Metal-binding</keyword>
<keyword id="KW-0520">NAD</keyword>
<keyword id="KW-0874">Quinone</keyword>
<keyword id="KW-1185">Reference proteome</keyword>
<keyword id="KW-1278">Translocase</keyword>
<keyword id="KW-0813">Transport</keyword>
<name>NUOB_BREBN</name>